<keyword id="KW-1185">Reference proteome</keyword>
<keyword id="KW-0678">Repressor</keyword>
<keyword id="KW-0687">Ribonucleoprotein</keyword>
<keyword id="KW-0689">Ribosomal protein</keyword>
<keyword id="KW-0694">RNA-binding</keyword>
<keyword id="KW-0699">rRNA-binding</keyword>
<keyword id="KW-0810">Translation regulation</keyword>
<keyword id="KW-0820">tRNA-binding</keyword>
<accession>Q8RHI3</accession>
<evidence type="ECO:0000255" key="1">
    <source>
        <dbReference type="HAMAP-Rule" id="MF_01318"/>
    </source>
</evidence>
<evidence type="ECO:0000305" key="2"/>
<sequence length="235" mass="25463">MGKHRGKKYLEVAKLVEIGKLYDIREALELVQKTKTAKFTETVEVALRLGVDPRHADQQIRGTVVLPHGTGKTVKILAITSGENIEKALAAGADYAGAEEYINQIQQGWLDFDLVIATPDMMPKIGRLGKILGTKGLMPNPKSGTVTPDIAAAVSEFKKGKLAFRVDKLGSIHAPIGKVDFDLDKIEENFKAFMDQIIRLKPASSKGQYLRTVAVSLTMGPGVKMDPAIVGKIVG</sequence>
<name>RL1_FUSNN</name>
<protein>
    <recommendedName>
        <fullName evidence="1">Large ribosomal subunit protein uL1</fullName>
    </recommendedName>
    <alternativeName>
        <fullName evidence="2">50S ribosomal protein L1</fullName>
    </alternativeName>
</protein>
<feature type="chain" id="PRO_0000125660" description="Large ribosomal subunit protein uL1">
    <location>
        <begin position="1"/>
        <end position="235"/>
    </location>
</feature>
<comment type="function">
    <text evidence="1">Binds directly to 23S rRNA. The L1 stalk is quite mobile in the ribosome, and is involved in E site tRNA release.</text>
</comment>
<comment type="function">
    <text evidence="1">Protein L1 is also a translational repressor protein, it controls the translation of the L11 operon by binding to its mRNA.</text>
</comment>
<comment type="subunit">
    <text evidence="1">Part of the 50S ribosomal subunit.</text>
</comment>
<comment type="similarity">
    <text evidence="1">Belongs to the universal ribosomal protein uL1 family.</text>
</comment>
<reference key="1">
    <citation type="journal article" date="2002" name="J. Bacteriol.">
        <title>Genome sequence and analysis of the oral bacterium Fusobacterium nucleatum strain ATCC 25586.</title>
        <authorList>
            <person name="Kapatral V."/>
            <person name="Anderson I."/>
            <person name="Ivanova N."/>
            <person name="Reznik G."/>
            <person name="Los T."/>
            <person name="Lykidis A."/>
            <person name="Bhattacharyya A."/>
            <person name="Bartman A."/>
            <person name="Gardner W."/>
            <person name="Grechkin G."/>
            <person name="Zhu L."/>
            <person name="Vasieva O."/>
            <person name="Chu L."/>
            <person name="Kogan Y."/>
            <person name="Chaga O."/>
            <person name="Goltsman E."/>
            <person name="Bernal A."/>
            <person name="Larsen N."/>
            <person name="D'Souza M."/>
            <person name="Walunas T."/>
            <person name="Pusch G."/>
            <person name="Haselkorn R."/>
            <person name="Fonstein M."/>
            <person name="Kyrpides N.C."/>
            <person name="Overbeek R."/>
        </authorList>
    </citation>
    <scope>NUCLEOTIDE SEQUENCE [LARGE SCALE GENOMIC DNA]</scope>
    <source>
        <strain>ATCC 25586 / DSM 15643 / BCRC 10681 / CIP 101130 / JCM 8532 / KCTC 2640 / LMG 13131 / VPI 4355</strain>
    </source>
</reference>
<organism>
    <name type="scientific">Fusobacterium nucleatum subsp. nucleatum (strain ATCC 25586 / DSM 15643 / BCRC 10681 / CIP 101130 / JCM 8532 / KCTC 2640 / LMG 13131 / VPI 4355)</name>
    <dbReference type="NCBI Taxonomy" id="190304"/>
    <lineage>
        <taxon>Bacteria</taxon>
        <taxon>Fusobacteriati</taxon>
        <taxon>Fusobacteriota</taxon>
        <taxon>Fusobacteriia</taxon>
        <taxon>Fusobacteriales</taxon>
        <taxon>Fusobacteriaceae</taxon>
        <taxon>Fusobacterium</taxon>
    </lineage>
</organism>
<gene>
    <name evidence="1" type="primary">rplA</name>
    <name type="ordered locus">FN2039</name>
</gene>
<proteinExistence type="inferred from homology"/>
<dbReference type="EMBL" id="AE009951">
    <property type="protein sequence ID" value="AAL94124.1"/>
    <property type="molecule type" value="Genomic_DNA"/>
</dbReference>
<dbReference type="RefSeq" id="NP_602825.1">
    <property type="nucleotide sequence ID" value="NC_003454.1"/>
</dbReference>
<dbReference type="RefSeq" id="WP_011015994.1">
    <property type="nucleotide sequence ID" value="NZ_CP028101.1"/>
</dbReference>
<dbReference type="SMR" id="Q8RHI3"/>
<dbReference type="FunCoup" id="Q8RHI3">
    <property type="interactions" value="427"/>
</dbReference>
<dbReference type="STRING" id="190304.FN2039"/>
<dbReference type="PaxDb" id="190304-FN2039"/>
<dbReference type="EnsemblBacteria" id="AAL94124">
    <property type="protein sequence ID" value="AAL94124"/>
    <property type="gene ID" value="FN2039"/>
</dbReference>
<dbReference type="GeneID" id="79782954"/>
<dbReference type="KEGG" id="fnu:FN2039"/>
<dbReference type="PATRIC" id="fig|190304.8.peg.502"/>
<dbReference type="eggNOG" id="COG0081">
    <property type="taxonomic scope" value="Bacteria"/>
</dbReference>
<dbReference type="HOGENOM" id="CLU_062853_0_0_0"/>
<dbReference type="InParanoid" id="Q8RHI3"/>
<dbReference type="BioCyc" id="FNUC190304:G1FZS-526-MONOMER"/>
<dbReference type="Proteomes" id="UP000002521">
    <property type="component" value="Chromosome"/>
</dbReference>
<dbReference type="GO" id="GO:0015934">
    <property type="term" value="C:large ribosomal subunit"/>
    <property type="evidence" value="ECO:0007669"/>
    <property type="project" value="InterPro"/>
</dbReference>
<dbReference type="GO" id="GO:0019843">
    <property type="term" value="F:rRNA binding"/>
    <property type="evidence" value="ECO:0007669"/>
    <property type="project" value="UniProtKB-UniRule"/>
</dbReference>
<dbReference type="GO" id="GO:0003735">
    <property type="term" value="F:structural constituent of ribosome"/>
    <property type="evidence" value="ECO:0007669"/>
    <property type="project" value="InterPro"/>
</dbReference>
<dbReference type="GO" id="GO:0000049">
    <property type="term" value="F:tRNA binding"/>
    <property type="evidence" value="ECO:0007669"/>
    <property type="project" value="UniProtKB-KW"/>
</dbReference>
<dbReference type="GO" id="GO:0006417">
    <property type="term" value="P:regulation of translation"/>
    <property type="evidence" value="ECO:0007669"/>
    <property type="project" value="UniProtKB-KW"/>
</dbReference>
<dbReference type="GO" id="GO:0006412">
    <property type="term" value="P:translation"/>
    <property type="evidence" value="ECO:0007669"/>
    <property type="project" value="UniProtKB-UniRule"/>
</dbReference>
<dbReference type="CDD" id="cd00403">
    <property type="entry name" value="Ribosomal_L1"/>
    <property type="match status" value="1"/>
</dbReference>
<dbReference type="FunFam" id="3.40.50.790:FF:000001">
    <property type="entry name" value="50S ribosomal protein L1"/>
    <property type="match status" value="1"/>
</dbReference>
<dbReference type="Gene3D" id="3.30.190.20">
    <property type="match status" value="1"/>
</dbReference>
<dbReference type="Gene3D" id="3.40.50.790">
    <property type="match status" value="1"/>
</dbReference>
<dbReference type="HAMAP" id="MF_01318_B">
    <property type="entry name" value="Ribosomal_uL1_B"/>
    <property type="match status" value="1"/>
</dbReference>
<dbReference type="InterPro" id="IPR005878">
    <property type="entry name" value="Ribosom_uL1_bac-type"/>
</dbReference>
<dbReference type="InterPro" id="IPR002143">
    <property type="entry name" value="Ribosomal_uL1"/>
</dbReference>
<dbReference type="InterPro" id="IPR023674">
    <property type="entry name" value="Ribosomal_uL1-like"/>
</dbReference>
<dbReference type="InterPro" id="IPR028364">
    <property type="entry name" value="Ribosomal_uL1/biogenesis"/>
</dbReference>
<dbReference type="InterPro" id="IPR016095">
    <property type="entry name" value="Ribosomal_uL1_3-a/b-sand"/>
</dbReference>
<dbReference type="InterPro" id="IPR023673">
    <property type="entry name" value="Ribosomal_uL1_CS"/>
</dbReference>
<dbReference type="NCBIfam" id="TIGR01169">
    <property type="entry name" value="rplA_bact"/>
    <property type="match status" value="1"/>
</dbReference>
<dbReference type="PANTHER" id="PTHR36427">
    <property type="entry name" value="54S RIBOSOMAL PROTEIN L1, MITOCHONDRIAL"/>
    <property type="match status" value="1"/>
</dbReference>
<dbReference type="PANTHER" id="PTHR36427:SF3">
    <property type="entry name" value="LARGE RIBOSOMAL SUBUNIT PROTEIN UL1M"/>
    <property type="match status" value="1"/>
</dbReference>
<dbReference type="Pfam" id="PF00687">
    <property type="entry name" value="Ribosomal_L1"/>
    <property type="match status" value="1"/>
</dbReference>
<dbReference type="PIRSF" id="PIRSF002155">
    <property type="entry name" value="Ribosomal_L1"/>
    <property type="match status" value="1"/>
</dbReference>
<dbReference type="SUPFAM" id="SSF56808">
    <property type="entry name" value="Ribosomal protein L1"/>
    <property type="match status" value="1"/>
</dbReference>
<dbReference type="PROSITE" id="PS01199">
    <property type="entry name" value="RIBOSOMAL_L1"/>
    <property type="match status" value="1"/>
</dbReference>